<accession>Q9HM21</accession>
<proteinExistence type="inferred from homology"/>
<name>RS19E_THEAC</name>
<keyword id="KW-1185">Reference proteome</keyword>
<keyword id="KW-0687">Ribonucleoprotein</keyword>
<keyword id="KW-0689">Ribosomal protein</keyword>
<sequence length="150" mass="17109">MVSVKYVPSDLLINYVSEKLKSEKKIAEPDWSKYVKTGISREKSPVNRDWIYVRAAAMLRKLYINGYLGISRMSSEYGGKVDRGSKRYHAAQGSRSIIRYLFHELEKAGYVQKTPKGRSLSPQGMSLLDNASKDIIKQLAEKDPAFQKFI</sequence>
<dbReference type="EMBL" id="AL445063">
    <property type="protein sequence ID" value="CAC11198.1"/>
    <property type="molecule type" value="Genomic_DNA"/>
</dbReference>
<dbReference type="RefSeq" id="WP_010900478.1">
    <property type="nucleotide sequence ID" value="NC_002578.1"/>
</dbReference>
<dbReference type="SMR" id="Q9HM21"/>
<dbReference type="FunCoup" id="Q9HM21">
    <property type="interactions" value="163"/>
</dbReference>
<dbReference type="STRING" id="273075.gene:9571265"/>
<dbReference type="PaxDb" id="273075-Ta0050"/>
<dbReference type="EnsemblBacteria" id="CAC11198">
    <property type="protein sequence ID" value="CAC11198"/>
    <property type="gene ID" value="CAC11198"/>
</dbReference>
<dbReference type="KEGG" id="tac:Ta0050"/>
<dbReference type="eggNOG" id="arCOG01344">
    <property type="taxonomic scope" value="Archaea"/>
</dbReference>
<dbReference type="HOGENOM" id="CLU_108559_1_0_2"/>
<dbReference type="InParanoid" id="Q9HM21"/>
<dbReference type="OrthoDB" id="371836at2157"/>
<dbReference type="Proteomes" id="UP000001024">
    <property type="component" value="Chromosome"/>
</dbReference>
<dbReference type="GO" id="GO:0022627">
    <property type="term" value="C:cytosolic small ribosomal subunit"/>
    <property type="evidence" value="ECO:0007669"/>
    <property type="project" value="TreeGrafter"/>
</dbReference>
<dbReference type="GO" id="GO:0003723">
    <property type="term" value="F:RNA binding"/>
    <property type="evidence" value="ECO:0007669"/>
    <property type="project" value="TreeGrafter"/>
</dbReference>
<dbReference type="GO" id="GO:0003735">
    <property type="term" value="F:structural constituent of ribosome"/>
    <property type="evidence" value="ECO:0007669"/>
    <property type="project" value="InterPro"/>
</dbReference>
<dbReference type="GO" id="GO:0000028">
    <property type="term" value="P:ribosomal small subunit assembly"/>
    <property type="evidence" value="ECO:0007669"/>
    <property type="project" value="TreeGrafter"/>
</dbReference>
<dbReference type="GO" id="GO:0006412">
    <property type="term" value="P:translation"/>
    <property type="evidence" value="ECO:0007669"/>
    <property type="project" value="UniProtKB-UniRule"/>
</dbReference>
<dbReference type="Gene3D" id="1.10.10.10">
    <property type="entry name" value="Winged helix-like DNA-binding domain superfamily/Winged helix DNA-binding domain"/>
    <property type="match status" value="1"/>
</dbReference>
<dbReference type="HAMAP" id="MF_01474">
    <property type="entry name" value="Ribosomal_eS19"/>
    <property type="match status" value="1"/>
</dbReference>
<dbReference type="InterPro" id="IPR001266">
    <property type="entry name" value="Ribosomal_eS19"/>
</dbReference>
<dbReference type="InterPro" id="IPR027548">
    <property type="entry name" value="Ribosomal_eS19_archaeal"/>
</dbReference>
<dbReference type="InterPro" id="IPR036388">
    <property type="entry name" value="WH-like_DNA-bd_sf"/>
</dbReference>
<dbReference type="InterPro" id="IPR036390">
    <property type="entry name" value="WH_DNA-bd_sf"/>
</dbReference>
<dbReference type="NCBIfam" id="NF006811">
    <property type="entry name" value="PRK09333.1"/>
    <property type="match status" value="1"/>
</dbReference>
<dbReference type="PANTHER" id="PTHR11710">
    <property type="entry name" value="40S RIBOSOMAL PROTEIN S19"/>
    <property type="match status" value="1"/>
</dbReference>
<dbReference type="PANTHER" id="PTHR11710:SF0">
    <property type="entry name" value="40S RIBOSOMAL PROTEIN S19"/>
    <property type="match status" value="1"/>
</dbReference>
<dbReference type="Pfam" id="PF01090">
    <property type="entry name" value="Ribosomal_S19e"/>
    <property type="match status" value="1"/>
</dbReference>
<dbReference type="SMART" id="SM01413">
    <property type="entry name" value="Ribosomal_S19e"/>
    <property type="match status" value="1"/>
</dbReference>
<dbReference type="SUPFAM" id="SSF46785">
    <property type="entry name" value="Winged helix' DNA-binding domain"/>
    <property type="match status" value="1"/>
</dbReference>
<reference key="1">
    <citation type="journal article" date="2000" name="Nature">
        <title>The genome sequence of the thermoacidophilic scavenger Thermoplasma acidophilum.</title>
        <authorList>
            <person name="Ruepp A."/>
            <person name="Graml W."/>
            <person name="Santos-Martinez M.-L."/>
            <person name="Koretke K.K."/>
            <person name="Volker C."/>
            <person name="Mewes H.-W."/>
            <person name="Frishman D."/>
            <person name="Stocker S."/>
            <person name="Lupas A.N."/>
            <person name="Baumeister W."/>
        </authorList>
    </citation>
    <scope>NUCLEOTIDE SEQUENCE [LARGE SCALE GENOMIC DNA]</scope>
    <source>
        <strain>ATCC 25905 / DSM 1728 / JCM 9062 / NBRC 15155 / AMRC-C165</strain>
    </source>
</reference>
<evidence type="ECO:0000255" key="1">
    <source>
        <dbReference type="HAMAP-Rule" id="MF_01474"/>
    </source>
</evidence>
<evidence type="ECO:0000305" key="2"/>
<comment type="function">
    <text evidence="1">May be involved in maturation of the 30S ribosomal subunit.</text>
</comment>
<comment type="subunit">
    <text evidence="1">Part of the 30S ribosomal subunit.</text>
</comment>
<comment type="similarity">
    <text evidence="1">Belongs to the eukaryotic ribosomal protein eS19 family.</text>
</comment>
<gene>
    <name evidence="1" type="primary">rps19e</name>
    <name type="ordered locus">Ta0050</name>
</gene>
<organism>
    <name type="scientific">Thermoplasma acidophilum (strain ATCC 25905 / DSM 1728 / JCM 9062 / NBRC 15155 / AMRC-C165)</name>
    <dbReference type="NCBI Taxonomy" id="273075"/>
    <lineage>
        <taxon>Archaea</taxon>
        <taxon>Methanobacteriati</taxon>
        <taxon>Thermoplasmatota</taxon>
        <taxon>Thermoplasmata</taxon>
        <taxon>Thermoplasmatales</taxon>
        <taxon>Thermoplasmataceae</taxon>
        <taxon>Thermoplasma</taxon>
    </lineage>
</organism>
<protein>
    <recommendedName>
        <fullName evidence="1">Small ribosomal subunit protein eS19</fullName>
    </recommendedName>
    <alternativeName>
        <fullName evidence="2">30S ribosomal protein S19e</fullName>
    </alternativeName>
</protein>
<feature type="chain" id="PRO_0000153843" description="Small ribosomal subunit protein eS19">
    <location>
        <begin position="1"/>
        <end position="150"/>
    </location>
</feature>